<dbReference type="EC" id="2.7.11.30" evidence="2"/>
<dbReference type="EMBL" id="D31899">
    <property type="protein sequence ID" value="BAA06697.1"/>
    <property type="molecule type" value="mRNA"/>
</dbReference>
<dbReference type="EMBL" id="U31222">
    <property type="protein sequence ID" value="AAA87841.1"/>
    <property type="molecule type" value="mRNA"/>
</dbReference>
<dbReference type="PIR" id="S23089">
    <property type="entry name" value="S23089"/>
</dbReference>
<dbReference type="RefSeq" id="NP_990698.1">
    <property type="nucleotide sequence ID" value="NM_205367.2"/>
</dbReference>
<dbReference type="SMR" id="Q90669"/>
<dbReference type="FunCoup" id="Q90669">
    <property type="interactions" value="705"/>
</dbReference>
<dbReference type="STRING" id="9031.ENSGALP00000037012"/>
<dbReference type="GlyCosmos" id="Q90669">
    <property type="glycosylation" value="2 sites, No reported glycans"/>
</dbReference>
<dbReference type="GlyGen" id="Q90669">
    <property type="glycosylation" value="2 sites"/>
</dbReference>
<dbReference type="PaxDb" id="9031-ENSGALP00000037012"/>
<dbReference type="Ensembl" id="ENSGALT00010022658.1">
    <property type="protein sequence ID" value="ENSGALP00010013077.1"/>
    <property type="gene ID" value="ENSGALG00010009474.1"/>
</dbReference>
<dbReference type="GeneID" id="396324"/>
<dbReference type="KEGG" id="gga:396324"/>
<dbReference type="CTD" id="92"/>
<dbReference type="VEuPathDB" id="HostDB:geneid_396324"/>
<dbReference type="eggNOG" id="KOG3653">
    <property type="taxonomic scope" value="Eukaryota"/>
</dbReference>
<dbReference type="GeneTree" id="ENSGT00940000157233"/>
<dbReference type="HOGENOM" id="CLU_000288_8_4_1"/>
<dbReference type="InParanoid" id="Q90669"/>
<dbReference type="OrthoDB" id="547665at2759"/>
<dbReference type="PhylomeDB" id="Q90669"/>
<dbReference type="TreeFam" id="TF352876"/>
<dbReference type="Reactome" id="R-GGA-1502540">
    <property type="pathway name" value="Signaling by Activin"/>
</dbReference>
<dbReference type="Reactome" id="R-GGA-201451">
    <property type="pathway name" value="Signaling by BMP"/>
</dbReference>
<dbReference type="Reactome" id="R-GGA-9839406">
    <property type="pathway name" value="TGFBR3 regulates activin signaling"/>
</dbReference>
<dbReference type="PRO" id="PR:Q90669"/>
<dbReference type="Proteomes" id="UP000000539">
    <property type="component" value="Chromosome 7"/>
</dbReference>
<dbReference type="Bgee" id="ENSGALG00000012444">
    <property type="expression patterns" value="Expressed in kidney and 14 other cell types or tissues"/>
</dbReference>
<dbReference type="GO" id="GO:0048179">
    <property type="term" value="C:activin receptor complex"/>
    <property type="evidence" value="ECO:0000318"/>
    <property type="project" value="GO_Central"/>
</dbReference>
<dbReference type="GO" id="GO:0005737">
    <property type="term" value="C:cytoplasm"/>
    <property type="evidence" value="ECO:0000314"/>
    <property type="project" value="AgBase"/>
</dbReference>
<dbReference type="GO" id="GO:0016020">
    <property type="term" value="C:membrane"/>
    <property type="evidence" value="ECO:0000314"/>
    <property type="project" value="AgBase"/>
</dbReference>
<dbReference type="GO" id="GO:0005886">
    <property type="term" value="C:plasma membrane"/>
    <property type="evidence" value="ECO:0000250"/>
    <property type="project" value="UniProtKB"/>
</dbReference>
<dbReference type="GO" id="GO:0048185">
    <property type="term" value="F:activin binding"/>
    <property type="evidence" value="ECO:0000314"/>
    <property type="project" value="AgBase"/>
</dbReference>
<dbReference type="GO" id="GO:0017002">
    <property type="term" value="F:activin receptor activity"/>
    <property type="evidence" value="ECO:0000250"/>
    <property type="project" value="UniProtKB"/>
</dbReference>
<dbReference type="GO" id="GO:0005524">
    <property type="term" value="F:ATP binding"/>
    <property type="evidence" value="ECO:0007669"/>
    <property type="project" value="UniProtKB-KW"/>
</dbReference>
<dbReference type="GO" id="GO:0046872">
    <property type="term" value="F:metal ion binding"/>
    <property type="evidence" value="ECO:0007669"/>
    <property type="project" value="UniProtKB-KW"/>
</dbReference>
<dbReference type="GO" id="GO:0032924">
    <property type="term" value="P:activin receptor signaling pathway"/>
    <property type="evidence" value="ECO:0000315"/>
    <property type="project" value="AgBase"/>
</dbReference>
<dbReference type="GO" id="GO:0009798">
    <property type="term" value="P:axis specification"/>
    <property type="evidence" value="ECO:0000315"/>
    <property type="project" value="AgBase"/>
</dbReference>
<dbReference type="GO" id="GO:0008283">
    <property type="term" value="P:cell population proliferation"/>
    <property type="evidence" value="ECO:0000315"/>
    <property type="project" value="AgBase"/>
</dbReference>
<dbReference type="GO" id="GO:0071363">
    <property type="term" value="P:cellular response to growth factor stimulus"/>
    <property type="evidence" value="ECO:0000318"/>
    <property type="project" value="GO_Central"/>
</dbReference>
<dbReference type="GO" id="GO:0048333">
    <property type="term" value="P:mesodermal cell differentiation"/>
    <property type="evidence" value="ECO:0000315"/>
    <property type="project" value="AgBase"/>
</dbReference>
<dbReference type="GO" id="GO:0007389">
    <property type="term" value="P:pattern specification process"/>
    <property type="evidence" value="ECO:0000318"/>
    <property type="project" value="GO_Central"/>
</dbReference>
<dbReference type="CDD" id="cd14141">
    <property type="entry name" value="STKc_ACVR2a"/>
    <property type="match status" value="1"/>
</dbReference>
<dbReference type="CDD" id="cd23631">
    <property type="entry name" value="TFP_LU_ECD_ACVR2A"/>
    <property type="match status" value="1"/>
</dbReference>
<dbReference type="FunFam" id="1.10.510.10:FF:000099">
    <property type="entry name" value="Serine/threonine-protein kinase receptor"/>
    <property type="match status" value="1"/>
</dbReference>
<dbReference type="FunFam" id="2.10.60.10:FF:000002">
    <property type="entry name" value="Serine/threonine-protein kinase receptor"/>
    <property type="match status" value="1"/>
</dbReference>
<dbReference type="FunFam" id="3.30.200.20:FF:000094">
    <property type="entry name" value="Serine/threonine-protein kinase receptor"/>
    <property type="match status" value="1"/>
</dbReference>
<dbReference type="Gene3D" id="2.10.60.10">
    <property type="entry name" value="CD59"/>
    <property type="match status" value="1"/>
</dbReference>
<dbReference type="Gene3D" id="3.30.200.20">
    <property type="entry name" value="Phosphorylase Kinase, domain 1"/>
    <property type="match status" value="1"/>
</dbReference>
<dbReference type="Gene3D" id="1.10.510.10">
    <property type="entry name" value="Transferase(Phosphotransferase) domain 1"/>
    <property type="match status" value="1"/>
</dbReference>
<dbReference type="InterPro" id="IPR011009">
    <property type="entry name" value="Kinase-like_dom_sf"/>
</dbReference>
<dbReference type="InterPro" id="IPR000719">
    <property type="entry name" value="Prot_kinase_dom"/>
</dbReference>
<dbReference type="InterPro" id="IPR008271">
    <property type="entry name" value="Ser/Thr_kinase_AS"/>
</dbReference>
<dbReference type="InterPro" id="IPR045860">
    <property type="entry name" value="Snake_toxin-like_sf"/>
</dbReference>
<dbReference type="InterPro" id="IPR000333">
    <property type="entry name" value="TGFB_receptor"/>
</dbReference>
<dbReference type="PANTHER" id="PTHR23255:SF64">
    <property type="entry name" value="ACTIVIN RECEPTOR TYPE-2A"/>
    <property type="match status" value="1"/>
</dbReference>
<dbReference type="PANTHER" id="PTHR23255">
    <property type="entry name" value="TRANSFORMING GROWTH FACTOR-BETA RECEPTOR TYPE I AND II"/>
    <property type="match status" value="1"/>
</dbReference>
<dbReference type="Pfam" id="PF00069">
    <property type="entry name" value="Pkinase"/>
    <property type="match status" value="1"/>
</dbReference>
<dbReference type="PRINTS" id="PR00653">
    <property type="entry name" value="ACTIVIN2R"/>
</dbReference>
<dbReference type="SMART" id="SM00220">
    <property type="entry name" value="S_TKc"/>
    <property type="match status" value="1"/>
</dbReference>
<dbReference type="SUPFAM" id="SSF56112">
    <property type="entry name" value="Protein kinase-like (PK-like)"/>
    <property type="match status" value="1"/>
</dbReference>
<dbReference type="SUPFAM" id="SSF57302">
    <property type="entry name" value="Snake toxin-like"/>
    <property type="match status" value="1"/>
</dbReference>
<dbReference type="PROSITE" id="PS50011">
    <property type="entry name" value="PROTEIN_KINASE_DOM"/>
    <property type="match status" value="1"/>
</dbReference>
<dbReference type="PROSITE" id="PS00108">
    <property type="entry name" value="PROTEIN_KINASE_ST"/>
    <property type="match status" value="1"/>
</dbReference>
<evidence type="ECO:0000250" key="1"/>
<evidence type="ECO:0000250" key="2">
    <source>
        <dbReference type="UniProtKB" id="P27038"/>
    </source>
</evidence>
<evidence type="ECO:0000255" key="3"/>
<evidence type="ECO:0000255" key="4">
    <source>
        <dbReference type="PROSITE-ProRule" id="PRU00159"/>
    </source>
</evidence>
<evidence type="ECO:0000255" key="5">
    <source>
        <dbReference type="PROSITE-ProRule" id="PRU10027"/>
    </source>
</evidence>
<evidence type="ECO:0000269" key="6">
    <source>
    </source>
</evidence>
<evidence type="ECO:0000269" key="7">
    <source>
    </source>
</evidence>
<evidence type="ECO:0000269" key="8">
    <source>
    </source>
</evidence>
<evidence type="ECO:0000269" key="9">
    <source>
    </source>
</evidence>
<evidence type="ECO:0000269" key="10">
    <source>
    </source>
</evidence>
<evidence type="ECO:0000269" key="11">
    <source>
    </source>
</evidence>
<evidence type="ECO:0000305" key="12"/>
<evidence type="ECO:0000305" key="13">
    <source>
    </source>
</evidence>
<feature type="signal peptide" evidence="3">
    <location>
        <begin position="1"/>
        <end position="19"/>
    </location>
</feature>
<feature type="chain" id="PRO_0000269545" description="Activin receptor type-2A">
    <location>
        <begin position="20"/>
        <end position="513"/>
    </location>
</feature>
<feature type="topological domain" description="Extracellular" evidence="3">
    <location>
        <begin position="20"/>
        <end position="139"/>
    </location>
</feature>
<feature type="transmembrane region" description="Helical" evidence="3">
    <location>
        <begin position="140"/>
        <end position="160"/>
    </location>
</feature>
<feature type="topological domain" description="Cytoplasmic" evidence="3">
    <location>
        <begin position="161"/>
        <end position="513"/>
    </location>
</feature>
<feature type="domain" description="Protein kinase" evidence="4">
    <location>
        <begin position="192"/>
        <end position="485"/>
    </location>
</feature>
<feature type="active site" description="Proton acceptor" evidence="4 5">
    <location>
        <position position="322"/>
    </location>
</feature>
<feature type="binding site" evidence="4">
    <location>
        <begin position="198"/>
        <end position="206"/>
    </location>
    <ligand>
        <name>ATP</name>
        <dbReference type="ChEBI" id="CHEBI:30616"/>
    </ligand>
</feature>
<feature type="binding site" evidence="4">
    <location>
        <position position="219"/>
    </location>
    <ligand>
        <name>ATP</name>
        <dbReference type="ChEBI" id="CHEBI:30616"/>
    </ligand>
</feature>
<feature type="glycosylation site" description="N-linked (GlcNAc...) asparagine" evidence="3">
    <location>
        <position position="43"/>
    </location>
</feature>
<feature type="glycosylation site" description="N-linked (GlcNAc...) asparagine" evidence="3">
    <location>
        <position position="66"/>
    </location>
</feature>
<feature type="disulfide bond" evidence="2">
    <location>
        <begin position="30"/>
        <end position="60"/>
    </location>
</feature>
<feature type="disulfide bond" evidence="2">
    <location>
        <begin position="50"/>
        <end position="78"/>
    </location>
</feature>
<feature type="disulfide bond" evidence="2">
    <location>
        <begin position="85"/>
        <end position="104"/>
    </location>
</feature>
<feature type="disulfide bond" evidence="2">
    <location>
        <begin position="91"/>
        <end position="103"/>
    </location>
</feature>
<feature type="disulfide bond" evidence="2">
    <location>
        <begin position="105"/>
        <end position="110"/>
    </location>
</feature>
<feature type="sequence conflict" description="In Ref. 1; BAA06697." evidence="12" ref="1">
    <original>F</original>
    <variation>L</variation>
    <location>
        <position position="9"/>
    </location>
</feature>
<feature type="sequence conflict" description="In Ref. 1; BAA06697." evidence="12" ref="1">
    <original>NRS</original>
    <variation>IAV</variation>
    <location>
        <begin position="43"/>
        <end position="45"/>
    </location>
</feature>
<feature type="sequence conflict" description="In Ref. 1; BAA06697." evidence="12" ref="1">
    <original>F</original>
    <variation>S</variation>
    <location>
        <position position="115"/>
    </location>
</feature>
<accession>Q90669</accession>
<accession>Q90745</accession>
<keyword id="KW-0067">ATP-binding</keyword>
<keyword id="KW-1003">Cell membrane</keyword>
<keyword id="KW-1015">Disulfide bond</keyword>
<keyword id="KW-0325">Glycoprotein</keyword>
<keyword id="KW-0418">Kinase</keyword>
<keyword id="KW-0460">Magnesium</keyword>
<keyword id="KW-0464">Manganese</keyword>
<keyword id="KW-0472">Membrane</keyword>
<keyword id="KW-0479">Metal-binding</keyword>
<keyword id="KW-0547">Nucleotide-binding</keyword>
<keyword id="KW-0675">Receptor</keyword>
<keyword id="KW-1185">Reference proteome</keyword>
<keyword id="KW-0723">Serine/threonine-protein kinase</keyword>
<keyword id="KW-0732">Signal</keyword>
<keyword id="KW-0808">Transferase</keyword>
<keyword id="KW-0812">Transmembrane</keyword>
<keyword id="KW-1133">Transmembrane helix</keyword>
<reference key="1">
    <citation type="journal article" date="1992" name="FEBS Lett.">
        <title>Expression pattern of the activin receptor type IIA gene during differentiation of chick neural tissues, muscle and skin.</title>
        <authorList>
            <person name="Ohuchi H."/>
            <person name="Noji S."/>
            <person name="Koyama E."/>
            <person name="Myokai F."/>
            <person name="Nishikawa K."/>
            <person name="Nohno T."/>
            <person name="Tashiro K."/>
            <person name="Shiokawa K."/>
            <person name="Matsuo N."/>
            <person name="Taniguchi S."/>
        </authorList>
    </citation>
    <scope>NUCLEOTIDE SEQUENCE [MRNA]</scope>
    <scope>DEVELOPMENTAL STAGE</scope>
    <source>
        <tissue>Embryo</tissue>
    </source>
</reference>
<reference key="2">
    <citation type="journal article" date="1995" name="Dev. Biol.">
        <title>Activin and its receptors during gastrulation and the later phases of mesoderm development in the chick embryo.</title>
        <authorList>
            <person name="Stern C.D."/>
            <person name="Yu R.T."/>
            <person name="Kakizuka A."/>
            <person name="Kintner C.R."/>
            <person name="Mathews L.S."/>
            <person name="Vale W.W."/>
            <person name="Evans R.M."/>
            <person name="Umesono K."/>
        </authorList>
    </citation>
    <scope>NUCLEOTIDE SEQUENCE [MRNA]</scope>
    <scope>DEVELOPMENTAL STAGE</scope>
    <scope>FUNCTION</scope>
    <source>
        <tissue>Embryo</tissue>
    </source>
</reference>
<reference key="3">
    <citation type="journal article" date="2001" name="J. Neurobiol.">
        <title>Activin type II receptors in embryonic dorsal root ganglion neurons of the chicken.</title>
        <authorList>
            <person name="Kos K."/>
            <person name="Fine L."/>
            <person name="Coulombe J.N."/>
        </authorList>
    </citation>
    <scope>FUNCTION</scope>
    <scope>DEVELOPMENTAL STAGE</scope>
</reference>
<reference key="4">
    <citation type="journal article" date="2005" name="Dev. Biol.">
        <title>The activin signaling pathway promotes differentiation of dI3 interneurons in the spinal neural tube.</title>
        <authorList>
            <person name="Timmer J."/>
            <person name="Chesnutt C."/>
            <person name="Niswander L."/>
        </authorList>
    </citation>
    <scope>FUNCTION</scope>
    <scope>DEVELOPMENTAL STAGE</scope>
</reference>
<reference key="5">
    <citation type="journal article" date="2005" name="J. Endocrinol.">
        <title>Variation in pituitary expression of mRNAs encoding the putative inhibin co-receptor (betaglycan) and type-I and type-II activin receptors during the chicken ovulatory cycle.</title>
        <authorList>
            <person name="Lovell T.M."/>
            <person name="Knight P.G."/>
            <person name="Gladwell R.T."/>
        </authorList>
    </citation>
    <scope>TISSUE SPECIFICITY</scope>
</reference>
<reference key="6">
    <citation type="journal article" date="2006" name="J. Endocrinol.">
        <title>Differential expression of mRNAs encoding the putative inhibin co-receptor (betaglycan) and activin type-I and type-II receptors in preovulatory and prehierarchical follicles of the laying hen ovary.</title>
        <authorList>
            <person name="Lovell T.M."/>
            <person name="Knight P.G."/>
            <person name="Gladwell R.T."/>
        </authorList>
    </citation>
    <scope>FUNCTION</scope>
    <scope>TISSUE SPECIFICITY</scope>
</reference>
<proteinExistence type="evidence at transcript level"/>
<comment type="function">
    <text evidence="6 8 10 11">On ligand binding, forms a receptor complex consisting of two type II and two type I transmembrane serine/threonine kinases. Type II receptors phosphorylate and activate type I receptors which autophosphorylate, then bind and activate SMAD transcriptional regulators. Receptor for activin A, activin B and inhibin A. May modulate neuropeptide expression in dorsal root ganglia (DRG) neurons and ovarian follicle development.</text>
</comment>
<comment type="catalytic activity">
    <reaction evidence="2">
        <text>L-threonyl-[receptor-protein] + ATP = O-phospho-L-threonyl-[receptor-protein] + ADP + H(+)</text>
        <dbReference type="Rhea" id="RHEA:44880"/>
        <dbReference type="Rhea" id="RHEA-COMP:11024"/>
        <dbReference type="Rhea" id="RHEA-COMP:11025"/>
        <dbReference type="ChEBI" id="CHEBI:15378"/>
        <dbReference type="ChEBI" id="CHEBI:30013"/>
        <dbReference type="ChEBI" id="CHEBI:30616"/>
        <dbReference type="ChEBI" id="CHEBI:61977"/>
        <dbReference type="ChEBI" id="CHEBI:456216"/>
        <dbReference type="EC" id="2.7.11.30"/>
    </reaction>
    <physiologicalReaction direction="left-to-right" evidence="2">
        <dbReference type="Rhea" id="RHEA:44881"/>
    </physiologicalReaction>
</comment>
<comment type="catalytic activity">
    <reaction evidence="2">
        <text>L-seryl-[receptor-protein] + ATP = O-phospho-L-seryl-[receptor-protein] + ADP + H(+)</text>
        <dbReference type="Rhea" id="RHEA:18673"/>
        <dbReference type="Rhea" id="RHEA-COMP:11022"/>
        <dbReference type="Rhea" id="RHEA-COMP:11023"/>
        <dbReference type="ChEBI" id="CHEBI:15378"/>
        <dbReference type="ChEBI" id="CHEBI:29999"/>
        <dbReference type="ChEBI" id="CHEBI:30616"/>
        <dbReference type="ChEBI" id="CHEBI:83421"/>
        <dbReference type="ChEBI" id="CHEBI:456216"/>
        <dbReference type="EC" id="2.7.11.30"/>
    </reaction>
    <physiologicalReaction direction="left-to-right" evidence="2">
        <dbReference type="Rhea" id="RHEA:18674"/>
    </physiologicalReaction>
</comment>
<comment type="cofactor">
    <cofactor evidence="1">
        <name>Mg(2+)</name>
        <dbReference type="ChEBI" id="CHEBI:18420"/>
    </cofactor>
    <cofactor evidence="1">
        <name>Mn(2+)</name>
        <dbReference type="ChEBI" id="CHEBI:29035"/>
    </cofactor>
</comment>
<comment type="subcellular location">
    <subcellularLocation>
        <location evidence="2">Cell membrane</location>
        <topology evidence="3">Single-pass type I membrane protein</topology>
    </subcellularLocation>
</comment>
<comment type="tissue specificity">
    <text evidence="9 10">Expressed in hen anterior pituitary during the ovulatory cycle and in the ovarian follicle.</text>
</comment>
<comment type="developmental stage">
    <text evidence="6 7 8 11">Expressed during the differentiation of neuroepithelium, of myotomes to muscle and of surface extoderm. Expressed in the dorsal root ganglia (DRG).</text>
</comment>
<comment type="similarity">
    <text evidence="12">Belongs to the protein kinase superfamily. TKL Ser/Thr protein kinase family. TGFB receptor subfamily.</text>
</comment>
<gene>
    <name type="primary">ACVR2A</name>
</gene>
<name>AVR2A_CHICK</name>
<protein>
    <recommendedName>
        <fullName evidence="13">Activin receptor type-2A</fullName>
        <ecNumber evidence="2">2.7.11.30</ecNumber>
    </recommendedName>
    <alternativeName>
        <fullName>Activin receptor type IIA</fullName>
        <shortName>ACTR-IIA</shortName>
        <shortName>ACTRIIA</shortName>
    </alternativeName>
</protein>
<sequence>MGAATKLAFAVFLISCSSGAILGRSETQECIYYNANWEKDKTNRSGIEPCYGDKDKRRHCFATWKNISGSIEIVKQGCWLDDINCYDRNDCIEKKDSPEVFFCCCEGNMCNERFFYFPEMEVTQPTSNPVTPKPPLFNTLLYSLVPIMGIAVIVLFSFWMYRHHKLAYPPVLVPTQDPGPPPPSPLMGLKPLQLLEIKARGRFGCVWKAQLLNEYVAVKIFPIQDKQSWQNEYEIYSLPGMKHDNILQFIGAEKRGTSIDVDLWLITAFHEKGSLTDFLKANVVSWNELCHIAQTMARGLAYLHEDIPGLKDGHKPAISHRDIKSKNVLLKNNLTACIADFGLALKFEAGKSAGDTHGQVGTRRYMAPEVLEGAINFQRDAFLRIDMYAMGLVLWELASRCTASDGPVDEYMLPFEEEIGQHPSLEDMQEVVVHKKKRPVLRECWQKHSGMAMLCETIEECWDHDAEARLSAGCVEERIIQMQKLTNIITTEDIVTVVTMVTNVDFPPKESSL</sequence>
<organism>
    <name type="scientific">Gallus gallus</name>
    <name type="common">Chicken</name>
    <dbReference type="NCBI Taxonomy" id="9031"/>
    <lineage>
        <taxon>Eukaryota</taxon>
        <taxon>Metazoa</taxon>
        <taxon>Chordata</taxon>
        <taxon>Craniata</taxon>
        <taxon>Vertebrata</taxon>
        <taxon>Euteleostomi</taxon>
        <taxon>Archelosauria</taxon>
        <taxon>Archosauria</taxon>
        <taxon>Dinosauria</taxon>
        <taxon>Saurischia</taxon>
        <taxon>Theropoda</taxon>
        <taxon>Coelurosauria</taxon>
        <taxon>Aves</taxon>
        <taxon>Neognathae</taxon>
        <taxon>Galloanserae</taxon>
        <taxon>Galliformes</taxon>
        <taxon>Phasianidae</taxon>
        <taxon>Phasianinae</taxon>
        <taxon>Gallus</taxon>
    </lineage>
</organism>